<sequence>MANSSIVALLLLFVIASSVNGGDQEYPNQYLTEALGDKEWLVSVRRQIHENPELLFELHKTSALIRRELDELGVSYSYPVAKTGIVAQIGSGYPPVVALRADMDALPLQELVEWDHKSKIDGKMHACGHDSHTTMLLGAAKLLSKRKRMLNGTVRLLFQPAEEGGAGAFHMIKEGALGDSEAIFGMHVHTGLPTGELATISGPALASTSIFSVRMSGKSPASSETYSCVDPVLAASSTILALQLIISREVDPLLSHVLSVTFMKSGGSEFDVIPAYVEFGGTLRSLTTNGINWLIKRLKEVVEGQAEVQRCKADIDMHEDDHPMYPATVNDHKLHEFTEKVLKLLLGPEKVKPANKVMAGEDFAFYQQKIPGYYIGIGIRNEEIGSVRSVHSPYFFLDENVLPIGSATFAALAEMYLQEHQNQTKSGD</sequence>
<evidence type="ECO:0000250" key="1">
    <source>
        <dbReference type="UniProtKB" id="P54968"/>
    </source>
</evidence>
<evidence type="ECO:0000250" key="2">
    <source>
        <dbReference type="UniProtKB" id="P54970"/>
    </source>
</evidence>
<evidence type="ECO:0000255" key="3"/>
<evidence type="ECO:0000269" key="4">
    <source>
    </source>
</evidence>
<evidence type="ECO:0000303" key="5">
    <source>
    </source>
</evidence>
<evidence type="ECO:0000305" key="6"/>
<evidence type="ECO:0000312" key="7">
    <source>
        <dbReference type="Araport" id="AT5G54140"/>
    </source>
</evidence>
<evidence type="ECO:0000312" key="8">
    <source>
        <dbReference type="EMBL" id="BAB11576.1"/>
    </source>
</evidence>
<dbReference type="EC" id="3.5.1.-" evidence="6"/>
<dbReference type="EMBL" id="AF081066">
    <property type="protein sequence ID" value="AAC31939.1"/>
    <property type="molecule type" value="Genomic_DNA"/>
</dbReference>
<dbReference type="EMBL" id="AB013387">
    <property type="protein sequence ID" value="BAB11576.1"/>
    <property type="molecule type" value="Genomic_DNA"/>
</dbReference>
<dbReference type="EMBL" id="AB018115">
    <property type="protein sequence ID" value="BAB11576.1"/>
    <property type="status" value="JOINED"/>
    <property type="molecule type" value="Genomic_DNA"/>
</dbReference>
<dbReference type="EMBL" id="CP002688">
    <property type="protein sequence ID" value="AED96456.1"/>
    <property type="molecule type" value="Genomic_DNA"/>
</dbReference>
<dbReference type="RefSeq" id="NP_200225.1">
    <property type="nucleotide sequence ID" value="NM_124794.3"/>
</dbReference>
<dbReference type="SMR" id="O81641"/>
<dbReference type="BioGRID" id="20745">
    <property type="interactions" value="1"/>
</dbReference>
<dbReference type="FunCoup" id="O81641">
    <property type="interactions" value="533"/>
</dbReference>
<dbReference type="STRING" id="3702.O81641"/>
<dbReference type="MEROPS" id="M20.A06"/>
<dbReference type="iPTMnet" id="O81641"/>
<dbReference type="PaxDb" id="3702-AT5G54140.1"/>
<dbReference type="ProteomicsDB" id="228839"/>
<dbReference type="EnsemblPlants" id="AT5G54140.1">
    <property type="protein sequence ID" value="AT5G54140.1"/>
    <property type="gene ID" value="AT5G54140"/>
</dbReference>
<dbReference type="GeneID" id="835501"/>
<dbReference type="Gramene" id="AT5G54140.1">
    <property type="protein sequence ID" value="AT5G54140.1"/>
    <property type="gene ID" value="AT5G54140"/>
</dbReference>
<dbReference type="KEGG" id="ath:AT5G54140"/>
<dbReference type="Araport" id="AT5G54140"/>
<dbReference type="TAIR" id="AT5G54140">
    <property type="gene designation" value="ILL3"/>
</dbReference>
<dbReference type="eggNOG" id="ENOG502QQEM">
    <property type="taxonomic scope" value="Eukaryota"/>
</dbReference>
<dbReference type="HOGENOM" id="CLU_023257_0_0_1"/>
<dbReference type="InParanoid" id="O81641"/>
<dbReference type="OMA" id="ITSACDR"/>
<dbReference type="PhylomeDB" id="O81641"/>
<dbReference type="BioCyc" id="ARA:AT5G54140-MONOMER"/>
<dbReference type="PRO" id="PR:O81641"/>
<dbReference type="Proteomes" id="UP000006548">
    <property type="component" value="Chromosome 5"/>
</dbReference>
<dbReference type="ExpressionAtlas" id="O81641">
    <property type="expression patterns" value="baseline and differential"/>
</dbReference>
<dbReference type="GO" id="GO:0010178">
    <property type="term" value="F:IAA-amino acid conjugate hydrolase activity"/>
    <property type="evidence" value="ECO:0000250"/>
    <property type="project" value="TAIR"/>
</dbReference>
<dbReference type="GO" id="GO:0046872">
    <property type="term" value="F:metal ion binding"/>
    <property type="evidence" value="ECO:0007669"/>
    <property type="project" value="UniProtKB-KW"/>
</dbReference>
<dbReference type="GO" id="GO:0009850">
    <property type="term" value="P:auxin metabolic process"/>
    <property type="evidence" value="ECO:0000250"/>
    <property type="project" value="TAIR"/>
</dbReference>
<dbReference type="CDD" id="cd08017">
    <property type="entry name" value="M20_IAA_Hyd"/>
    <property type="match status" value="1"/>
</dbReference>
<dbReference type="FunFam" id="3.30.70.360:FF:000001">
    <property type="entry name" value="N-acetyldiaminopimelate deacetylase"/>
    <property type="match status" value="1"/>
</dbReference>
<dbReference type="Gene3D" id="3.30.70.360">
    <property type="match status" value="1"/>
</dbReference>
<dbReference type="Gene3D" id="3.40.630.10">
    <property type="entry name" value="Zn peptidases"/>
    <property type="match status" value="1"/>
</dbReference>
<dbReference type="InterPro" id="IPR017439">
    <property type="entry name" value="Amidohydrolase"/>
</dbReference>
<dbReference type="InterPro" id="IPR036264">
    <property type="entry name" value="Bact_exopeptidase_dim_dom"/>
</dbReference>
<dbReference type="InterPro" id="IPR044757">
    <property type="entry name" value="ILR1-like_Hyd"/>
</dbReference>
<dbReference type="InterPro" id="IPR002933">
    <property type="entry name" value="Peptidase_M20"/>
</dbReference>
<dbReference type="NCBIfam" id="TIGR01891">
    <property type="entry name" value="amidohydrolases"/>
    <property type="match status" value="1"/>
</dbReference>
<dbReference type="PANTHER" id="PTHR11014:SF140">
    <property type="entry name" value="IAA-AMINO ACID HYDROLASE ILR1-LIKE 3"/>
    <property type="match status" value="1"/>
</dbReference>
<dbReference type="PANTHER" id="PTHR11014">
    <property type="entry name" value="PEPTIDASE M20 FAMILY MEMBER"/>
    <property type="match status" value="1"/>
</dbReference>
<dbReference type="Pfam" id="PF01546">
    <property type="entry name" value="Peptidase_M20"/>
    <property type="match status" value="1"/>
</dbReference>
<dbReference type="PIRSF" id="PIRSF005962">
    <property type="entry name" value="Pept_M20D_amidohydro"/>
    <property type="match status" value="1"/>
</dbReference>
<dbReference type="SUPFAM" id="SSF55031">
    <property type="entry name" value="Bacterial exopeptidase dimerisation domain"/>
    <property type="match status" value="1"/>
</dbReference>
<dbReference type="SUPFAM" id="SSF53187">
    <property type="entry name" value="Zn-dependent exopeptidases"/>
    <property type="match status" value="1"/>
</dbReference>
<accession>O81641</accession>
<protein>
    <recommendedName>
        <fullName evidence="5">IAA-amino acid hydrolase ILR1-like 3</fullName>
        <ecNumber evidence="6">3.5.1.-</ecNumber>
    </recommendedName>
</protein>
<comment type="function">
    <text evidence="1">Hydrolyzes certain amino acid conjugates of the plant growth regulator indole-3-acetic acid (IAA).</text>
</comment>
<comment type="tissue specificity">
    <text evidence="4">Expressed in cotyledons, leaves, and hypocotyls of seedlings, and in leaves and pollen of mature plants.</text>
</comment>
<comment type="similarity">
    <text evidence="6">Belongs to the peptidase M20 family.</text>
</comment>
<name>ILL3_ARATH</name>
<reference key="1">
    <citation type="journal article" date="1999" name="Plant Cell">
        <title>IAR3 encodes an auxin conjugate hydrolase from Arabidopsis.</title>
        <authorList>
            <person name="Davies R.T."/>
            <person name="Goetz D.H."/>
            <person name="Lasswell J.E."/>
            <person name="Anderson M.N."/>
            <person name="Bartel B."/>
        </authorList>
    </citation>
    <scope>NUCLEOTIDE SEQUENCE [GENOMIC DNA]</scope>
    <source>
        <strain>cv. Columbia</strain>
    </source>
</reference>
<reference key="2">
    <citation type="journal article" date="1998" name="DNA Res.">
        <title>Structural analysis of Arabidopsis thaliana chromosome 5. VI. Sequence features of the regions of 1,367,185 bp covered by 19 physically assigned P1 and TAC clones.</title>
        <authorList>
            <person name="Kotani H."/>
            <person name="Nakamura Y."/>
            <person name="Sato S."/>
            <person name="Asamizu E."/>
            <person name="Kaneko T."/>
            <person name="Miyajima N."/>
            <person name="Tabata S."/>
        </authorList>
    </citation>
    <scope>NUCLEOTIDE SEQUENCE [LARGE SCALE GENOMIC DNA]</scope>
    <source>
        <strain>cv. Columbia</strain>
    </source>
</reference>
<reference key="3">
    <citation type="journal article" date="2000" name="DNA Res.">
        <title>Structural analysis of Arabidopsis thaliana chromosome 5. X. Sequence features of the regions of 3,076,755 bp covered by sixty P1 and TAC clones.</title>
        <authorList>
            <person name="Sato S."/>
            <person name="Nakamura Y."/>
            <person name="Kaneko T."/>
            <person name="Katoh T."/>
            <person name="Asamizu E."/>
            <person name="Kotani H."/>
            <person name="Tabata S."/>
        </authorList>
    </citation>
    <scope>NUCLEOTIDE SEQUENCE [LARGE SCALE GENOMIC DNA]</scope>
    <source>
        <strain>cv. Columbia</strain>
    </source>
</reference>
<reference key="4">
    <citation type="journal article" date="2017" name="Plant J.">
        <title>Araport11: a complete reannotation of the Arabidopsis thaliana reference genome.</title>
        <authorList>
            <person name="Cheng C.Y."/>
            <person name="Krishnakumar V."/>
            <person name="Chan A.P."/>
            <person name="Thibaud-Nissen F."/>
            <person name="Schobel S."/>
            <person name="Town C.D."/>
        </authorList>
    </citation>
    <scope>GENOME REANNOTATION</scope>
    <source>
        <strain>cv. Columbia</strain>
    </source>
</reference>
<reference key="5">
    <citation type="journal article" date="2002" name="J. Biol. Chem.">
        <title>Characterization of a family of IAA-amino acid conjugate hydrolases from Arabidopsis.</title>
        <authorList>
            <person name="LeClere S."/>
            <person name="Tellez R."/>
            <person name="Rampey R.A."/>
            <person name="Matsuda S.P.T."/>
            <person name="Bartel B."/>
        </authorList>
    </citation>
    <scope>GENE FAMILY</scope>
</reference>
<reference key="6">
    <citation type="journal article" date="2004" name="Plant Physiol.">
        <title>A family of auxin-conjugate hydrolases that contributes to free indole-3-acetic acid levels during Arabidopsis germination.</title>
        <authorList>
            <person name="Rampey R.A."/>
            <person name="LeClere S."/>
            <person name="Kowalczyk M."/>
            <person name="Ljung K."/>
            <person name="Sandberg G."/>
            <person name="Bartel B."/>
        </authorList>
    </citation>
    <scope>TISSUE SPECIFICITY</scope>
</reference>
<proteinExistence type="evidence at transcript level"/>
<organism>
    <name type="scientific">Arabidopsis thaliana</name>
    <name type="common">Mouse-ear cress</name>
    <dbReference type="NCBI Taxonomy" id="3702"/>
    <lineage>
        <taxon>Eukaryota</taxon>
        <taxon>Viridiplantae</taxon>
        <taxon>Streptophyta</taxon>
        <taxon>Embryophyta</taxon>
        <taxon>Tracheophyta</taxon>
        <taxon>Spermatophyta</taxon>
        <taxon>Magnoliopsida</taxon>
        <taxon>eudicotyledons</taxon>
        <taxon>Gunneridae</taxon>
        <taxon>Pentapetalae</taxon>
        <taxon>rosids</taxon>
        <taxon>malvids</taxon>
        <taxon>Brassicales</taxon>
        <taxon>Brassicaceae</taxon>
        <taxon>Camelineae</taxon>
        <taxon>Arabidopsis</taxon>
    </lineage>
</organism>
<keyword id="KW-0378">Hydrolase</keyword>
<keyword id="KW-0464">Manganese</keyword>
<keyword id="KW-0479">Metal-binding</keyword>
<keyword id="KW-1185">Reference proteome</keyword>
<keyword id="KW-0732">Signal</keyword>
<feature type="signal peptide" evidence="3">
    <location>
        <begin position="1"/>
        <end position="21"/>
    </location>
</feature>
<feature type="chain" id="PRO_0000045469" description="IAA-amino acid hydrolase ILR1-like 3">
    <location>
        <begin position="22"/>
        <end position="428"/>
    </location>
</feature>
<feature type="binding site" evidence="2">
    <location>
        <position position="127"/>
    </location>
    <ligand>
        <name>Mn(2+)</name>
        <dbReference type="ChEBI" id="CHEBI:29035"/>
        <label>1</label>
    </ligand>
</feature>
<feature type="binding site" evidence="2">
    <location>
        <position position="127"/>
    </location>
    <ligand>
        <name>Mn(2+)</name>
        <dbReference type="ChEBI" id="CHEBI:29035"/>
        <label>2</label>
    </ligand>
</feature>
<feature type="binding site" evidence="2">
    <location>
        <position position="129"/>
    </location>
    <ligand>
        <name>Mn(2+)</name>
        <dbReference type="ChEBI" id="CHEBI:29035"/>
        <label>2</label>
    </ligand>
</feature>
<feature type="binding site" evidence="2">
    <location>
        <position position="163"/>
    </location>
    <ligand>
        <name>Mn(2+)</name>
        <dbReference type="ChEBI" id="CHEBI:29035"/>
        <label>1</label>
    </ligand>
</feature>
<feature type="binding site" evidence="2">
    <location>
        <position position="187"/>
    </location>
    <ligand>
        <name>Mn(2+)</name>
        <dbReference type="ChEBI" id="CHEBI:29035"/>
        <label>2</label>
    </ligand>
</feature>
<feature type="binding site" evidence="2">
    <location>
        <position position="391"/>
    </location>
    <ligand>
        <name>Mn(2+)</name>
        <dbReference type="ChEBI" id="CHEBI:29035"/>
        <label>1</label>
    </ligand>
</feature>
<gene>
    <name evidence="5" type="primary">ILL3</name>
    <name evidence="7" type="ordered locus">At5g54140</name>
    <name evidence="8" type="ORF">MJP23.12</name>
</gene>